<accession>Q5A1N6</accession>
<accession>A0A1D8PN43</accession>
<dbReference type="EMBL" id="CP017627">
    <property type="protein sequence ID" value="AOW29548.1"/>
    <property type="molecule type" value="Genomic_DNA"/>
</dbReference>
<dbReference type="RefSeq" id="XP_715723.1">
    <property type="nucleotide sequence ID" value="XM_710630.2"/>
</dbReference>
<dbReference type="SMR" id="Q5A1N6"/>
<dbReference type="BioGRID" id="1225718">
    <property type="interactions" value="2"/>
</dbReference>
<dbReference type="FunCoup" id="Q5A1N6">
    <property type="interactions" value="210"/>
</dbReference>
<dbReference type="STRING" id="237561.Q5A1N6"/>
<dbReference type="EnsemblFungi" id="C5_01100C_A-T">
    <property type="protein sequence ID" value="C5_01100C_A-T-p1"/>
    <property type="gene ID" value="C5_01100C_A"/>
</dbReference>
<dbReference type="GeneID" id="3642624"/>
<dbReference type="KEGG" id="cal:CAALFM_C501100CA"/>
<dbReference type="CGD" id="CAL0000185532">
    <property type="gene designation" value="CLN3"/>
</dbReference>
<dbReference type="VEuPathDB" id="FungiDB:C5_01100C_A"/>
<dbReference type="eggNOG" id="KOG0653">
    <property type="taxonomic scope" value="Eukaryota"/>
</dbReference>
<dbReference type="HOGENOM" id="CLU_033561_0_0_1"/>
<dbReference type="InParanoid" id="Q5A1N6"/>
<dbReference type="OrthoDB" id="5590282at2759"/>
<dbReference type="PRO" id="PR:Q5A1N6"/>
<dbReference type="Proteomes" id="UP000000559">
    <property type="component" value="Chromosome 5"/>
</dbReference>
<dbReference type="GO" id="GO:0000307">
    <property type="term" value="C:cyclin-dependent protein kinase holoenzyme complex"/>
    <property type="evidence" value="ECO:0000318"/>
    <property type="project" value="GO_Central"/>
</dbReference>
<dbReference type="GO" id="GO:0005737">
    <property type="term" value="C:cytoplasm"/>
    <property type="evidence" value="ECO:0000318"/>
    <property type="project" value="GO_Central"/>
</dbReference>
<dbReference type="GO" id="GO:0005634">
    <property type="term" value="C:nucleus"/>
    <property type="evidence" value="ECO:0000318"/>
    <property type="project" value="GO_Central"/>
</dbReference>
<dbReference type="GO" id="GO:0016538">
    <property type="term" value="F:cyclin-dependent protein serine/threonine kinase regulator activity"/>
    <property type="evidence" value="ECO:0000316"/>
    <property type="project" value="CGD"/>
</dbReference>
<dbReference type="GO" id="GO:0004672">
    <property type="term" value="F:protein kinase activity"/>
    <property type="evidence" value="ECO:0000315"/>
    <property type="project" value="CGD"/>
</dbReference>
<dbReference type="GO" id="GO:0007114">
    <property type="term" value="P:cell budding"/>
    <property type="evidence" value="ECO:0000315"/>
    <property type="project" value="CGD"/>
</dbReference>
<dbReference type="GO" id="GO:0030447">
    <property type="term" value="P:filamentous growth"/>
    <property type="evidence" value="ECO:0000315"/>
    <property type="project" value="CGD"/>
</dbReference>
<dbReference type="GO" id="GO:0044182">
    <property type="term" value="P:filamentous growth of a population of unicellular organisms"/>
    <property type="evidence" value="ECO:0000315"/>
    <property type="project" value="CGD"/>
</dbReference>
<dbReference type="GO" id="GO:0000082">
    <property type="term" value="P:G1/S transition of mitotic cell cycle"/>
    <property type="evidence" value="ECO:0000270"/>
    <property type="project" value="CGD"/>
</dbReference>
<dbReference type="GO" id="GO:0030448">
    <property type="term" value="P:hyphal growth"/>
    <property type="evidence" value="ECO:0000315"/>
    <property type="project" value="CGD"/>
</dbReference>
<dbReference type="GO" id="GO:0060258">
    <property type="term" value="P:negative regulation of filamentous growth"/>
    <property type="evidence" value="ECO:0000315"/>
    <property type="project" value="CGD"/>
</dbReference>
<dbReference type="GO" id="GO:1900429">
    <property type="term" value="P:negative regulation of filamentous growth of a population of unicellular organisms"/>
    <property type="evidence" value="ECO:0000315"/>
    <property type="project" value="CGD"/>
</dbReference>
<dbReference type="GO" id="GO:0051726">
    <property type="term" value="P:regulation of cell cycle"/>
    <property type="evidence" value="ECO:0000315"/>
    <property type="project" value="CGD"/>
</dbReference>
<dbReference type="GO" id="GO:2000045">
    <property type="term" value="P:regulation of G1/S transition of mitotic cell cycle"/>
    <property type="evidence" value="ECO:0007669"/>
    <property type="project" value="InterPro"/>
</dbReference>
<dbReference type="GO" id="GO:0044010">
    <property type="term" value="P:single-species biofilm formation"/>
    <property type="evidence" value="ECO:0000316"/>
    <property type="project" value="CGD"/>
</dbReference>
<dbReference type="CDD" id="cd20559">
    <property type="entry name" value="CYCLIN_ScCLN_like"/>
    <property type="match status" value="1"/>
</dbReference>
<dbReference type="FunFam" id="1.10.472.10:FF:000080">
    <property type="entry name" value="G1/S-specific cyclin"/>
    <property type="match status" value="1"/>
</dbReference>
<dbReference type="Gene3D" id="1.10.472.10">
    <property type="entry name" value="Cyclin-like"/>
    <property type="match status" value="2"/>
</dbReference>
<dbReference type="InterPro" id="IPR039361">
    <property type="entry name" value="Cyclin"/>
</dbReference>
<dbReference type="InterPro" id="IPR013763">
    <property type="entry name" value="Cyclin-like_dom"/>
</dbReference>
<dbReference type="InterPro" id="IPR036915">
    <property type="entry name" value="Cyclin-like_sf"/>
</dbReference>
<dbReference type="InterPro" id="IPR014399">
    <property type="entry name" value="Cyclin_CLN"/>
</dbReference>
<dbReference type="InterPro" id="IPR006671">
    <property type="entry name" value="Cyclin_N"/>
</dbReference>
<dbReference type="InterPro" id="IPR048258">
    <property type="entry name" value="Cyclins_cyclin-box"/>
</dbReference>
<dbReference type="PANTHER" id="PTHR10177">
    <property type="entry name" value="CYCLINS"/>
    <property type="match status" value="1"/>
</dbReference>
<dbReference type="Pfam" id="PF00134">
    <property type="entry name" value="Cyclin_N"/>
    <property type="match status" value="1"/>
</dbReference>
<dbReference type="PIRSF" id="PIRSF001770">
    <property type="entry name" value="Cyclin_CLN"/>
    <property type="match status" value="1"/>
</dbReference>
<dbReference type="SMART" id="SM00385">
    <property type="entry name" value="CYCLIN"/>
    <property type="match status" value="1"/>
</dbReference>
<dbReference type="SUPFAM" id="SSF47954">
    <property type="entry name" value="Cyclin-like"/>
    <property type="match status" value="1"/>
</dbReference>
<dbReference type="PROSITE" id="PS00292">
    <property type="entry name" value="CYCLINS"/>
    <property type="match status" value="1"/>
</dbReference>
<evidence type="ECO:0000269" key="1">
    <source>
    </source>
</evidence>
<evidence type="ECO:0000269" key="2">
    <source>
    </source>
</evidence>
<evidence type="ECO:0000269" key="3">
    <source>
    </source>
</evidence>
<evidence type="ECO:0000269" key="4">
    <source>
    </source>
</evidence>
<evidence type="ECO:0000269" key="5">
    <source>
    </source>
</evidence>
<evidence type="ECO:0000269" key="6">
    <source>
    </source>
</evidence>
<evidence type="ECO:0000305" key="7"/>
<feature type="chain" id="PRO_0000424364" description="G1/S-specific cyclin CLN3">
    <location>
        <begin position="1"/>
        <end position="465"/>
    </location>
</feature>
<feature type="domain" description="Cyclin N-terminal">
    <location>
        <begin position="44"/>
        <end position="171"/>
    </location>
</feature>
<name>CG13_CANAL</name>
<sequence length="465" mass="53177">MFPNSPDAFHQVRMMQSSIKASNFKLQSMEFRCHSNNVCEYQMEMLHHLLSVEAKTLPNLSLIEQQPEIKLGMRPLLLDFLMEVITILSLSRSTFPLTVNLIDRYCSTRIVKKQHYQLLGLTSLWISCKNLDSKFKVPTLNDLRKICVDSYYKELFVEMEKHILKSLEWVVNAPTFDAFIDLYSNLLISNSSNFEVANIIKKSSHKIKLFSNYIGELFQFYPNIYYDYTSSQIALIAILITVLTLKIPVDLISLLNFYNGLVKTEMFKSNVEQGAEDQFEEILSVDSFKSLFNKSFFKNLIKIIDNPPSSLKIKYFAENGKYSVLMKQLVTTASNTLKCILDPVPTTPKANSFVKHQQQQHHYHPRPPMSINTSMIPLTPVSNSTSPNRFSPDQIFSENESTPGIAFGTMTPDSQSTSPGEKRSYECIDELEIGTSTIAGYTLKNHDTLKRSKSANYGTLFYLQQ</sequence>
<keyword id="KW-0131">Cell cycle</keyword>
<keyword id="KW-0132">Cell division</keyword>
<keyword id="KW-0195">Cyclin</keyword>
<keyword id="KW-0498">Mitosis</keyword>
<keyword id="KW-0597">Phosphoprotein</keyword>
<keyword id="KW-1185">Reference proteome</keyword>
<reference key="1">
    <citation type="journal article" date="2004" name="Proc. Natl. Acad. Sci. U.S.A.">
        <title>The diploid genome sequence of Candida albicans.</title>
        <authorList>
            <person name="Jones T."/>
            <person name="Federspiel N.A."/>
            <person name="Chibana H."/>
            <person name="Dungan J."/>
            <person name="Kalman S."/>
            <person name="Magee B.B."/>
            <person name="Newport G."/>
            <person name="Thorstenson Y.R."/>
            <person name="Agabian N."/>
            <person name="Magee P.T."/>
            <person name="Davis R.W."/>
            <person name="Scherer S."/>
        </authorList>
    </citation>
    <scope>NUCLEOTIDE SEQUENCE [LARGE SCALE GENOMIC DNA]</scope>
    <source>
        <strain>SC5314 / ATCC MYA-2876</strain>
    </source>
</reference>
<reference key="2">
    <citation type="journal article" date="2007" name="Genome Biol.">
        <title>Assembly of the Candida albicans genome into sixteen supercontigs aligned on the eight chromosomes.</title>
        <authorList>
            <person name="van het Hoog M."/>
            <person name="Rast T.J."/>
            <person name="Martchenko M."/>
            <person name="Grindle S."/>
            <person name="Dignard D."/>
            <person name="Hogues H."/>
            <person name="Cuomo C."/>
            <person name="Berriman M."/>
            <person name="Scherer S."/>
            <person name="Magee B.B."/>
            <person name="Whiteway M."/>
            <person name="Chibana H."/>
            <person name="Nantel A."/>
            <person name="Magee P.T."/>
        </authorList>
    </citation>
    <scope>GENOME REANNOTATION</scope>
    <source>
        <strain>SC5314 / ATCC MYA-2876</strain>
    </source>
</reference>
<reference key="3">
    <citation type="journal article" date="2013" name="Genome Biol.">
        <title>Assembly of a phased diploid Candida albicans genome facilitates allele-specific measurements and provides a simple model for repeat and indel structure.</title>
        <authorList>
            <person name="Muzzey D."/>
            <person name="Schwartz K."/>
            <person name="Weissman J.S."/>
            <person name="Sherlock G."/>
        </authorList>
    </citation>
    <scope>NUCLEOTIDE SEQUENCE [LARGE SCALE GENOMIC DNA]</scope>
    <scope>GENOME REANNOTATION</scope>
    <source>
        <strain>SC5314 / ATCC MYA-2876</strain>
    </source>
</reference>
<reference key="4">
    <citation type="journal article" date="1994" name="Mol. Gen. Genet.">
        <title>Molecular cloning and analysis of CDC28 and cyclin homologues from the human fungal pathogen Candida albicans.</title>
        <authorList>
            <person name="Sherlock G."/>
            <person name="Bahman A.M."/>
            <person name="Mahal A."/>
            <person name="Shieh J.C."/>
            <person name="Ferreira M."/>
            <person name="Rosamond J."/>
        </authorList>
    </citation>
    <scope>IDENTIFICATION</scope>
</reference>
<reference key="5">
    <citation type="journal article" date="2005" name="Eukaryot. Cell">
        <title>The G1 cyclin Cln3 regulates morphogenesis in Candida albicans.</title>
        <authorList>
            <person name="Chapa y Lazo B."/>
            <person name="Bates S."/>
            <person name="Sudbery P."/>
        </authorList>
    </citation>
    <scope>FUNCTION</scope>
</reference>
<reference key="6">
    <citation type="journal article" date="2005" name="Eukaryot. Cell">
        <title>Cyclin Cln3p links G1 progression to hyphal and pseudohyphal development in Candida albicans.</title>
        <authorList>
            <person name="Bachewich C."/>
            <person name="Whiteway M."/>
        </authorList>
    </citation>
    <scope>FUNCTION</scope>
</reference>
<reference key="7">
    <citation type="journal article" date="2005" name="Eukaryot. Cell">
        <title>Release from quorum-sensing molecules triggers hyphal formation during Candida albicans resumption of growth.</title>
        <authorList>
            <person name="Enjalbert B."/>
            <person name="Whiteway M."/>
        </authorList>
    </citation>
    <scope>INDUCTION</scope>
</reference>
<reference key="8">
    <citation type="journal article" date="2006" name="Mol. Microbiol.">
        <title>The F-box protein Grr1 regulates the stability of Ccn1, Cln3 and Hof1 and cell morphogenesis in Candida albicans.</title>
        <authorList>
            <person name="Li W.J."/>
            <person name="Wang Y.M."/>
            <person name="Zheng X.D."/>
            <person name="Shi Q.M."/>
            <person name="Zhang T.T."/>
            <person name="Bai C."/>
            <person name="Li D."/>
            <person name="Sang J.L."/>
            <person name="Wang Y."/>
        </authorList>
    </citation>
    <scope>HYPERPHOSPHORYLATION</scope>
    <scope>GRR1-MEDIATED DEGRADATION</scope>
    <scope>FUNCTION</scope>
</reference>
<reference key="9">
    <citation type="journal article" date="2007" name="Dev. Cell">
        <title>Cyclin-dependent kinases control septin phosphorylation in Candida albicans hyphal development.</title>
        <authorList>
            <person name="Sinha I."/>
            <person name="Wang Y.M."/>
            <person name="Philp R."/>
            <person name="Li C.R."/>
            <person name="Yap W.H."/>
            <person name="Wang Y."/>
        </authorList>
    </citation>
    <scope>INTERACTION WITH CDC28</scope>
</reference>
<reference key="10">
    <citation type="journal article" date="2012" name="Mol. Biol. Cell">
        <title>Cdc28-Cln3 phosphorylation of Sla1 regulates actin patch dynamics in different modes of fungal growth.</title>
        <authorList>
            <person name="Zeng G."/>
            <person name="Wang Y.M."/>
            <person name="Wang Y."/>
        </authorList>
    </citation>
    <scope>INTERACTION WITH CDC28 AND SLA1</scope>
    <scope>FUNCTION</scope>
</reference>
<organism>
    <name type="scientific">Candida albicans (strain SC5314 / ATCC MYA-2876)</name>
    <name type="common">Yeast</name>
    <dbReference type="NCBI Taxonomy" id="237561"/>
    <lineage>
        <taxon>Eukaryota</taxon>
        <taxon>Fungi</taxon>
        <taxon>Dikarya</taxon>
        <taxon>Ascomycota</taxon>
        <taxon>Saccharomycotina</taxon>
        <taxon>Pichiomycetes</taxon>
        <taxon>Debaryomycetaceae</taxon>
        <taxon>Candida/Lodderomyces clade</taxon>
        <taxon>Candida</taxon>
    </lineage>
</organism>
<gene>
    <name type="primary">CLN3</name>
    <name type="synonym">CLN2</name>
    <name type="ordered locus">CAALFM_C501100CA</name>
    <name type="ORF">CaO19.1960</name>
    <name type="ORF">CaO19.9515</name>
</gene>
<proteinExistence type="evidence at protein level"/>
<comment type="function">
    <text evidence="1 2 4 6">G1/S-specific cyclin essential for the control of the cell cycle at the G1/S (start) transition. CLN3 may be an upstream activator of the G1 cyclins which directly catalyze start. Required for budding and for cell cycle progression and morphogenesis in environment-induced hyphae. Degradation is mediated by GRR1. Through binding to CDC28, controls the phosphorylation of SLA1 which regulates cortical actin patch dynamics.</text>
</comment>
<comment type="subunit">
    <text evidence="5 6">Interacts with CDC28 and SLA1.</text>
</comment>
<comment type="induction">
    <text evidence="3">Repressed by farnesol.</text>
</comment>
<comment type="PTM">
    <text>Hyperphosphorylated. GRR1 preferentially mediates the degradation of hyperphosphorylated CLN3.</text>
</comment>
<comment type="similarity">
    <text evidence="7">Belongs to the cyclin family.</text>
</comment>
<protein>
    <recommendedName>
        <fullName>G1/S-specific cyclin CLN3</fullName>
    </recommendedName>
</protein>